<accession>Q0C3D1</accession>
<gene>
    <name evidence="1" type="primary">ctaB</name>
    <name type="ordered locus">HNE_1040</name>
</gene>
<evidence type="ECO:0000255" key="1">
    <source>
        <dbReference type="HAMAP-Rule" id="MF_00154"/>
    </source>
</evidence>
<protein>
    <recommendedName>
        <fullName evidence="1">Protoheme IX farnesyltransferase</fullName>
        <ecNumber evidence="1">2.5.1.141</ecNumber>
    </recommendedName>
    <alternativeName>
        <fullName evidence="1">Heme B farnesyltransferase</fullName>
    </alternativeName>
    <alternativeName>
        <fullName evidence="1">Heme O synthase</fullName>
    </alternativeName>
</protein>
<comment type="function">
    <text evidence="1">Converts heme B (protoheme IX) to heme O by substitution of the vinyl group on carbon 2 of heme B porphyrin ring with a hydroxyethyl farnesyl side group.</text>
</comment>
<comment type="catalytic activity">
    <reaction evidence="1">
        <text>heme b + (2E,6E)-farnesyl diphosphate + H2O = Fe(II)-heme o + diphosphate</text>
        <dbReference type="Rhea" id="RHEA:28070"/>
        <dbReference type="ChEBI" id="CHEBI:15377"/>
        <dbReference type="ChEBI" id="CHEBI:33019"/>
        <dbReference type="ChEBI" id="CHEBI:60344"/>
        <dbReference type="ChEBI" id="CHEBI:60530"/>
        <dbReference type="ChEBI" id="CHEBI:175763"/>
        <dbReference type="EC" id="2.5.1.141"/>
    </reaction>
</comment>
<comment type="pathway">
    <text evidence="1">Porphyrin-containing compound metabolism; heme O biosynthesis; heme O from protoheme: step 1/1.</text>
</comment>
<comment type="subunit">
    <text evidence="1">Interacts with CtaA.</text>
</comment>
<comment type="subcellular location">
    <subcellularLocation>
        <location evidence="1">Cell inner membrane</location>
        <topology evidence="1">Multi-pass membrane protein</topology>
    </subcellularLocation>
</comment>
<comment type="miscellaneous">
    <text evidence="1">Carbon 2 of the heme B porphyrin ring is defined according to the Fischer nomenclature.</text>
</comment>
<comment type="similarity">
    <text evidence="1">Belongs to the UbiA prenyltransferase family. Protoheme IX farnesyltransferase subfamily.</text>
</comment>
<organism>
    <name type="scientific">Hyphomonas neptunium (strain ATCC 15444)</name>
    <dbReference type="NCBI Taxonomy" id="228405"/>
    <lineage>
        <taxon>Bacteria</taxon>
        <taxon>Pseudomonadati</taxon>
        <taxon>Pseudomonadota</taxon>
        <taxon>Alphaproteobacteria</taxon>
        <taxon>Hyphomonadales</taxon>
        <taxon>Hyphomonadaceae</taxon>
        <taxon>Hyphomonas</taxon>
    </lineage>
</organism>
<name>COXX_HYPNA</name>
<dbReference type="EC" id="2.5.1.141" evidence="1"/>
<dbReference type="EMBL" id="CP000158">
    <property type="protein sequence ID" value="ABI76517.1"/>
    <property type="molecule type" value="Genomic_DNA"/>
</dbReference>
<dbReference type="RefSeq" id="WP_011646062.1">
    <property type="nucleotide sequence ID" value="NC_008358.1"/>
</dbReference>
<dbReference type="SMR" id="Q0C3D1"/>
<dbReference type="STRING" id="228405.HNE_1040"/>
<dbReference type="KEGG" id="hne:HNE_1040"/>
<dbReference type="eggNOG" id="COG0109">
    <property type="taxonomic scope" value="Bacteria"/>
</dbReference>
<dbReference type="HOGENOM" id="CLU_029631_0_2_5"/>
<dbReference type="UniPathway" id="UPA00834">
    <property type="reaction ID" value="UER00712"/>
</dbReference>
<dbReference type="Proteomes" id="UP000001959">
    <property type="component" value="Chromosome"/>
</dbReference>
<dbReference type="GO" id="GO:0005886">
    <property type="term" value="C:plasma membrane"/>
    <property type="evidence" value="ECO:0007669"/>
    <property type="project" value="UniProtKB-SubCell"/>
</dbReference>
<dbReference type="GO" id="GO:0008495">
    <property type="term" value="F:protoheme IX farnesyltransferase activity"/>
    <property type="evidence" value="ECO:0007669"/>
    <property type="project" value="UniProtKB-UniRule"/>
</dbReference>
<dbReference type="GO" id="GO:0048034">
    <property type="term" value="P:heme O biosynthetic process"/>
    <property type="evidence" value="ECO:0007669"/>
    <property type="project" value="UniProtKB-UniRule"/>
</dbReference>
<dbReference type="CDD" id="cd13957">
    <property type="entry name" value="PT_UbiA_Cox10"/>
    <property type="match status" value="1"/>
</dbReference>
<dbReference type="Gene3D" id="1.10.357.140">
    <property type="entry name" value="UbiA prenyltransferase"/>
    <property type="match status" value="1"/>
</dbReference>
<dbReference type="HAMAP" id="MF_00154">
    <property type="entry name" value="CyoE_CtaB"/>
    <property type="match status" value="1"/>
</dbReference>
<dbReference type="InterPro" id="IPR006369">
    <property type="entry name" value="Protohaem_IX_farnesylTrfase"/>
</dbReference>
<dbReference type="InterPro" id="IPR000537">
    <property type="entry name" value="UbiA_prenyltransferase"/>
</dbReference>
<dbReference type="InterPro" id="IPR030470">
    <property type="entry name" value="UbiA_prenylTrfase_CS"/>
</dbReference>
<dbReference type="InterPro" id="IPR044878">
    <property type="entry name" value="UbiA_sf"/>
</dbReference>
<dbReference type="NCBIfam" id="TIGR01473">
    <property type="entry name" value="cyoE_ctaB"/>
    <property type="match status" value="1"/>
</dbReference>
<dbReference type="NCBIfam" id="NF003349">
    <property type="entry name" value="PRK04375.1-2"/>
    <property type="match status" value="1"/>
</dbReference>
<dbReference type="PANTHER" id="PTHR43448:SF7">
    <property type="entry name" value="4-HYDROXYBENZOATE SOLANESYLTRANSFERASE"/>
    <property type="match status" value="1"/>
</dbReference>
<dbReference type="PANTHER" id="PTHR43448">
    <property type="entry name" value="PROTOHEME IX FARNESYLTRANSFERASE, MITOCHONDRIAL"/>
    <property type="match status" value="1"/>
</dbReference>
<dbReference type="Pfam" id="PF01040">
    <property type="entry name" value="UbiA"/>
    <property type="match status" value="1"/>
</dbReference>
<dbReference type="PROSITE" id="PS00943">
    <property type="entry name" value="UBIA"/>
    <property type="match status" value="1"/>
</dbReference>
<keyword id="KW-0997">Cell inner membrane</keyword>
<keyword id="KW-1003">Cell membrane</keyword>
<keyword id="KW-0350">Heme biosynthesis</keyword>
<keyword id="KW-0472">Membrane</keyword>
<keyword id="KW-1185">Reference proteome</keyword>
<keyword id="KW-0808">Transferase</keyword>
<keyword id="KW-0812">Transmembrane</keyword>
<keyword id="KW-1133">Transmembrane helix</keyword>
<sequence>MTELTAATPTKRPATATDYVNLMKPRIMMLVVFTAVAGLAAASGMTGITMHPAMAAIAVLAVALGSGAAGAINMWYDADIDAIMSRTSTRPIPSGAVPKEEALTMGLIMSGVSVMLMWLASNWLAAALLAFSIFYYGVIYTMWLKRATPQNIVIGGGAGAFPPVIGWAAVTGNTPLDAWILFAIIFFWTPPHFWALSLLAHKEYAKVSVPMLPVTHGAKATRFQILVYTLVLIPVSLAPLATGLGGWIYGAVAGGLGLVFLAYAVAILRSKAGDDGAPAGDMKLARTAFLFSILYLFALFGAVLVEHAAGLHFPVFGA</sequence>
<proteinExistence type="inferred from homology"/>
<feature type="chain" id="PRO_0000327063" description="Protoheme IX farnesyltransferase">
    <location>
        <begin position="1"/>
        <end position="318"/>
    </location>
</feature>
<feature type="transmembrane region" description="Helical" evidence="1">
    <location>
        <begin position="27"/>
        <end position="47"/>
    </location>
</feature>
<feature type="transmembrane region" description="Helical" evidence="1">
    <location>
        <begin position="52"/>
        <end position="72"/>
    </location>
</feature>
<feature type="transmembrane region" description="Helical" evidence="1">
    <location>
        <begin position="103"/>
        <end position="123"/>
    </location>
</feature>
<feature type="transmembrane region" description="Helical" evidence="1">
    <location>
        <begin position="124"/>
        <end position="144"/>
    </location>
</feature>
<feature type="transmembrane region" description="Helical" evidence="1">
    <location>
        <begin position="152"/>
        <end position="172"/>
    </location>
</feature>
<feature type="transmembrane region" description="Helical" evidence="1">
    <location>
        <begin position="179"/>
        <end position="199"/>
    </location>
</feature>
<feature type="transmembrane region" description="Helical" evidence="1">
    <location>
        <begin position="225"/>
        <end position="245"/>
    </location>
</feature>
<feature type="transmembrane region" description="Helical" evidence="1">
    <location>
        <begin position="248"/>
        <end position="268"/>
    </location>
</feature>
<feature type="transmembrane region" description="Helical" evidence="1">
    <location>
        <begin position="288"/>
        <end position="308"/>
    </location>
</feature>
<reference key="1">
    <citation type="journal article" date="2006" name="J. Bacteriol.">
        <title>Comparative genomic evidence for a close relationship between the dimorphic prosthecate bacteria Hyphomonas neptunium and Caulobacter crescentus.</title>
        <authorList>
            <person name="Badger J.H."/>
            <person name="Hoover T.R."/>
            <person name="Brun Y.V."/>
            <person name="Weiner R.M."/>
            <person name="Laub M.T."/>
            <person name="Alexandre G."/>
            <person name="Mrazek J."/>
            <person name="Ren Q."/>
            <person name="Paulsen I.T."/>
            <person name="Nelson K.E."/>
            <person name="Khouri H.M."/>
            <person name="Radune D."/>
            <person name="Sosa J."/>
            <person name="Dodson R.J."/>
            <person name="Sullivan S.A."/>
            <person name="Rosovitz M.J."/>
            <person name="Madupu R."/>
            <person name="Brinkac L.M."/>
            <person name="Durkin A.S."/>
            <person name="Daugherty S.C."/>
            <person name="Kothari S.P."/>
            <person name="Giglio M.G."/>
            <person name="Zhou L."/>
            <person name="Haft D.H."/>
            <person name="Selengut J.D."/>
            <person name="Davidsen T.M."/>
            <person name="Yang Q."/>
            <person name="Zafar N."/>
            <person name="Ward N.L."/>
        </authorList>
    </citation>
    <scope>NUCLEOTIDE SEQUENCE [LARGE SCALE GENOMIC DNA]</scope>
    <source>
        <strain>ATCC 15444</strain>
    </source>
</reference>